<proteinExistence type="inferred from homology"/>
<feature type="chain" id="PRO_0000091953" description="Vitamin B12 import ATP-binding protein BtuD">
    <location>
        <begin position="1"/>
        <end position="250"/>
    </location>
</feature>
<feature type="domain" description="ABC transporter" evidence="1">
    <location>
        <begin position="3"/>
        <end position="233"/>
    </location>
</feature>
<feature type="binding site" evidence="1">
    <location>
        <begin position="29"/>
        <end position="36"/>
    </location>
    <ligand>
        <name>ATP</name>
        <dbReference type="ChEBI" id="CHEBI:30616"/>
    </ligand>
</feature>
<organism>
    <name type="scientific">Pectobacterium atrosepticum (strain SCRI 1043 / ATCC BAA-672)</name>
    <name type="common">Erwinia carotovora subsp. atroseptica</name>
    <dbReference type="NCBI Taxonomy" id="218491"/>
    <lineage>
        <taxon>Bacteria</taxon>
        <taxon>Pseudomonadati</taxon>
        <taxon>Pseudomonadota</taxon>
        <taxon>Gammaproteobacteria</taxon>
        <taxon>Enterobacterales</taxon>
        <taxon>Pectobacteriaceae</taxon>
        <taxon>Pectobacterium</taxon>
    </lineage>
</organism>
<keyword id="KW-0067">ATP-binding</keyword>
<keyword id="KW-0997">Cell inner membrane</keyword>
<keyword id="KW-1003">Cell membrane</keyword>
<keyword id="KW-0472">Membrane</keyword>
<keyword id="KW-0547">Nucleotide-binding</keyword>
<keyword id="KW-1185">Reference proteome</keyword>
<keyword id="KW-1278">Translocase</keyword>
<keyword id="KW-0813">Transport</keyword>
<evidence type="ECO:0000255" key="1">
    <source>
        <dbReference type="HAMAP-Rule" id="MF_01005"/>
    </source>
</evidence>
<sequence>MQLRQASVLPRLSPTNAECRPGELLHIIGPNGAGKSTLLARAAGLLAGEGEVYLAGTPLSQYTAADLAVRRAYLAQQQPPLALMPVFQYWQRHQPPLAQEYAVEKVVHFLAERLMLTDKLARPLTQLSGGEWQRVRLVAALLQIWPTINPHARLLLLDEPTNSLDVAQQVALDSLLSELCRLGIAVVVCAHDLNHSAHHADRVWLLSAGVLVAQGETEDVMLPEVLSPVFGVAFQRHVVDGRNWIITRSA</sequence>
<comment type="function">
    <text evidence="1">Part of the ABC transporter complex BtuCDF involved in vitamin B12 import. Responsible for energy coupling to the transport system.</text>
</comment>
<comment type="catalytic activity">
    <reaction evidence="1">
        <text>an R-cob(III)alamin(out) + ATP + H2O = an R-cob(III)alamin(in) + ADP + phosphate + H(+)</text>
        <dbReference type="Rhea" id="RHEA:17873"/>
        <dbReference type="ChEBI" id="CHEBI:15377"/>
        <dbReference type="ChEBI" id="CHEBI:15378"/>
        <dbReference type="ChEBI" id="CHEBI:30616"/>
        <dbReference type="ChEBI" id="CHEBI:43474"/>
        <dbReference type="ChEBI" id="CHEBI:140785"/>
        <dbReference type="ChEBI" id="CHEBI:456216"/>
        <dbReference type="EC" id="7.6.2.8"/>
    </reaction>
</comment>
<comment type="subunit">
    <text evidence="1">The complex is composed of two ATP-binding proteins (BtuD), two transmembrane proteins (BtuC) and a solute-binding protein (BtuF).</text>
</comment>
<comment type="subcellular location">
    <subcellularLocation>
        <location evidence="1">Cell inner membrane</location>
        <topology evidence="1">Peripheral membrane protein</topology>
    </subcellularLocation>
</comment>
<comment type="similarity">
    <text evidence="1">Belongs to the ABC transporter superfamily. Vitamin B12 importer (TC 3.A.1.13.1) family.</text>
</comment>
<gene>
    <name evidence="1" type="primary">btuD</name>
    <name type="ordered locus">ECA1834</name>
</gene>
<protein>
    <recommendedName>
        <fullName evidence="1">Vitamin B12 import ATP-binding protein BtuD</fullName>
        <ecNumber evidence="1">7.6.2.8</ecNumber>
    </recommendedName>
    <alternativeName>
        <fullName evidence="1">Vitamin B12-transporting ATPase</fullName>
    </alternativeName>
</protein>
<reference key="1">
    <citation type="journal article" date="2004" name="Proc. Natl. Acad. Sci. U.S.A.">
        <title>Genome sequence of the enterobacterial phytopathogen Erwinia carotovora subsp. atroseptica and characterization of virulence factors.</title>
        <authorList>
            <person name="Bell K.S."/>
            <person name="Sebaihia M."/>
            <person name="Pritchard L."/>
            <person name="Holden M.T.G."/>
            <person name="Hyman L.J."/>
            <person name="Holeva M.C."/>
            <person name="Thomson N.R."/>
            <person name="Bentley S.D."/>
            <person name="Churcher L.J.C."/>
            <person name="Mungall K."/>
            <person name="Atkin R."/>
            <person name="Bason N."/>
            <person name="Brooks K."/>
            <person name="Chillingworth T."/>
            <person name="Clark K."/>
            <person name="Doggett J."/>
            <person name="Fraser A."/>
            <person name="Hance Z."/>
            <person name="Hauser H."/>
            <person name="Jagels K."/>
            <person name="Moule S."/>
            <person name="Norbertczak H."/>
            <person name="Ormond D."/>
            <person name="Price C."/>
            <person name="Quail M.A."/>
            <person name="Sanders M."/>
            <person name="Walker D."/>
            <person name="Whitehead S."/>
            <person name="Salmond G.P.C."/>
            <person name="Birch P.R.J."/>
            <person name="Parkhill J."/>
            <person name="Toth I.K."/>
        </authorList>
    </citation>
    <scope>NUCLEOTIDE SEQUENCE [LARGE SCALE GENOMIC DNA]</scope>
    <source>
        <strain>SCRI 1043 / ATCC BAA-672</strain>
    </source>
</reference>
<name>BTUD_PECAS</name>
<dbReference type="EC" id="7.6.2.8" evidence="1"/>
<dbReference type="EMBL" id="BX950851">
    <property type="protein sequence ID" value="CAG74737.1"/>
    <property type="molecule type" value="Genomic_DNA"/>
</dbReference>
<dbReference type="SMR" id="Q6D654"/>
<dbReference type="STRING" id="218491.ECA1834"/>
<dbReference type="KEGG" id="eca:ECA1834"/>
<dbReference type="eggNOG" id="COG4138">
    <property type="taxonomic scope" value="Bacteria"/>
</dbReference>
<dbReference type="HOGENOM" id="CLU_000604_1_11_6"/>
<dbReference type="Proteomes" id="UP000007966">
    <property type="component" value="Chromosome"/>
</dbReference>
<dbReference type="GO" id="GO:0005886">
    <property type="term" value="C:plasma membrane"/>
    <property type="evidence" value="ECO:0007669"/>
    <property type="project" value="UniProtKB-SubCell"/>
</dbReference>
<dbReference type="GO" id="GO:0015420">
    <property type="term" value="F:ABC-type vitamin B12 transporter activity"/>
    <property type="evidence" value="ECO:0007669"/>
    <property type="project" value="UniProtKB-UniRule"/>
</dbReference>
<dbReference type="GO" id="GO:0005524">
    <property type="term" value="F:ATP binding"/>
    <property type="evidence" value="ECO:0007669"/>
    <property type="project" value="UniProtKB-KW"/>
</dbReference>
<dbReference type="GO" id="GO:0016887">
    <property type="term" value="F:ATP hydrolysis activity"/>
    <property type="evidence" value="ECO:0007669"/>
    <property type="project" value="InterPro"/>
</dbReference>
<dbReference type="CDD" id="cd03214">
    <property type="entry name" value="ABC_Iron-Siderophores_B12_Hemin"/>
    <property type="match status" value="1"/>
</dbReference>
<dbReference type="FunFam" id="3.40.50.300:FF:000462">
    <property type="entry name" value="Vitamin B12 import ATP-binding protein BtuD"/>
    <property type="match status" value="1"/>
</dbReference>
<dbReference type="Gene3D" id="3.40.50.300">
    <property type="entry name" value="P-loop containing nucleotide triphosphate hydrolases"/>
    <property type="match status" value="1"/>
</dbReference>
<dbReference type="HAMAP" id="MF_01005">
    <property type="entry name" value="BtuD"/>
    <property type="match status" value="1"/>
</dbReference>
<dbReference type="InterPro" id="IPR003593">
    <property type="entry name" value="AAA+_ATPase"/>
</dbReference>
<dbReference type="InterPro" id="IPR003439">
    <property type="entry name" value="ABC_transporter-like_ATP-bd"/>
</dbReference>
<dbReference type="InterPro" id="IPR017871">
    <property type="entry name" value="ABC_transporter-like_CS"/>
</dbReference>
<dbReference type="InterPro" id="IPR023693">
    <property type="entry name" value="ABC_transptr_BtuD"/>
</dbReference>
<dbReference type="InterPro" id="IPR027417">
    <property type="entry name" value="P-loop_NTPase"/>
</dbReference>
<dbReference type="NCBIfam" id="NF002981">
    <property type="entry name" value="PRK03695.1"/>
    <property type="match status" value="1"/>
</dbReference>
<dbReference type="PANTHER" id="PTHR42794">
    <property type="entry name" value="HEMIN IMPORT ATP-BINDING PROTEIN HMUV"/>
    <property type="match status" value="1"/>
</dbReference>
<dbReference type="PANTHER" id="PTHR42794:SF1">
    <property type="entry name" value="HEMIN IMPORT ATP-BINDING PROTEIN HMUV"/>
    <property type="match status" value="1"/>
</dbReference>
<dbReference type="Pfam" id="PF00005">
    <property type="entry name" value="ABC_tran"/>
    <property type="match status" value="1"/>
</dbReference>
<dbReference type="SMART" id="SM00382">
    <property type="entry name" value="AAA"/>
    <property type="match status" value="1"/>
</dbReference>
<dbReference type="SUPFAM" id="SSF52540">
    <property type="entry name" value="P-loop containing nucleoside triphosphate hydrolases"/>
    <property type="match status" value="1"/>
</dbReference>
<dbReference type="PROSITE" id="PS00211">
    <property type="entry name" value="ABC_TRANSPORTER_1"/>
    <property type="match status" value="1"/>
</dbReference>
<dbReference type="PROSITE" id="PS50893">
    <property type="entry name" value="ABC_TRANSPORTER_2"/>
    <property type="match status" value="1"/>
</dbReference>
<accession>Q6D654</accession>